<name>SYQ_XANCP</name>
<sequence length="579" mass="65649">MSEIPATDATAPAEKKDFIRQIVREDLASGKHTAIRTRFPPEPNGYLHIGHAKAICLDFGLAAEFGGLCNLRLDDTNPAKEDPEFVVAIQDDVRWLGFEWAQLRHASDYFEVYYLAAEKLIRDGHAFVCDLSAEQVRQYRGTLTEPGRNSPFRERSVDENLDLFRRMRAGEFPDGARTLRAKIDMASGNINLRDPALYRIKHVEHQNTGNAWPIYPMYDFAHSLGDAVEGITHSLCTLEFEDHRPLYDWCVDKVDLSGHPELLAPLLGKGYPKEAAKPRQIEFSRLNINYTVMSKRKLTALVEEQLVDGWDDPRMYTLQGLRRRGYTPAAMRLFVDRVGISKQNSVIDFSVLEGCLREDLDAAAARRMAVIDPLKLVLTNLPEGHTETLQFSNHPKDESFGTREVPFARELWIEREDFAEVPPKGWKRLVPGGEIRLRGAGIARVDEVIKDAAGEIVELRGWLDPESRPGMIGSNRKVKGTIHWVSAVHAVEAEIRLYDRLFSVEKPDDESEGKTYRDYLNPESKRSVRGYVEPSAAQAAPEQAFQFERTGYFVADRRDHSAATPAFNRSVTLRDTWAK</sequence>
<feature type="chain" id="PRO_0000195856" description="Glutamine--tRNA ligase">
    <location>
        <begin position="1"/>
        <end position="579"/>
    </location>
</feature>
<feature type="short sequence motif" description="'HIGH' region" evidence="1">
    <location>
        <begin position="41"/>
        <end position="51"/>
    </location>
</feature>
<feature type="short sequence motif" description="'KMSKS' region" evidence="1">
    <location>
        <begin position="292"/>
        <end position="296"/>
    </location>
</feature>
<feature type="binding site" evidence="1">
    <location>
        <begin position="42"/>
        <end position="44"/>
    </location>
    <ligand>
        <name>ATP</name>
        <dbReference type="ChEBI" id="CHEBI:30616"/>
    </ligand>
</feature>
<feature type="binding site" evidence="1">
    <location>
        <begin position="48"/>
        <end position="54"/>
    </location>
    <ligand>
        <name>ATP</name>
        <dbReference type="ChEBI" id="CHEBI:30616"/>
    </ligand>
</feature>
<feature type="binding site" evidence="1">
    <location>
        <position position="74"/>
    </location>
    <ligand>
        <name>L-glutamine</name>
        <dbReference type="ChEBI" id="CHEBI:58359"/>
    </ligand>
</feature>
<feature type="binding site" evidence="1">
    <location>
        <position position="218"/>
    </location>
    <ligand>
        <name>L-glutamine</name>
        <dbReference type="ChEBI" id="CHEBI:58359"/>
    </ligand>
</feature>
<feature type="binding site" evidence="1">
    <location>
        <position position="237"/>
    </location>
    <ligand>
        <name>ATP</name>
        <dbReference type="ChEBI" id="CHEBI:30616"/>
    </ligand>
</feature>
<feature type="binding site" evidence="1">
    <location>
        <begin position="285"/>
        <end position="286"/>
    </location>
    <ligand>
        <name>ATP</name>
        <dbReference type="ChEBI" id="CHEBI:30616"/>
    </ligand>
</feature>
<feature type="binding site" evidence="1">
    <location>
        <begin position="293"/>
        <end position="295"/>
    </location>
    <ligand>
        <name>ATP</name>
        <dbReference type="ChEBI" id="CHEBI:30616"/>
    </ligand>
</feature>
<dbReference type="EC" id="6.1.1.18" evidence="1"/>
<dbReference type="EMBL" id="AE008922">
    <property type="protein sequence ID" value="AAM40136.1"/>
    <property type="molecule type" value="Genomic_DNA"/>
</dbReference>
<dbReference type="RefSeq" id="NP_636212.1">
    <property type="nucleotide sequence ID" value="NC_003902.1"/>
</dbReference>
<dbReference type="RefSeq" id="WP_011036057.1">
    <property type="nucleotide sequence ID" value="NC_003902.1"/>
</dbReference>
<dbReference type="SMR" id="Q8PCB3"/>
<dbReference type="STRING" id="190485.XCC0821"/>
<dbReference type="EnsemblBacteria" id="AAM40136">
    <property type="protein sequence ID" value="AAM40136"/>
    <property type="gene ID" value="XCC0821"/>
</dbReference>
<dbReference type="KEGG" id="xcc:XCC0821"/>
<dbReference type="PATRIC" id="fig|190485.4.peg.894"/>
<dbReference type="eggNOG" id="COG0008">
    <property type="taxonomic scope" value="Bacteria"/>
</dbReference>
<dbReference type="HOGENOM" id="CLU_001882_2_3_6"/>
<dbReference type="OrthoDB" id="9801560at2"/>
<dbReference type="Proteomes" id="UP000001010">
    <property type="component" value="Chromosome"/>
</dbReference>
<dbReference type="GO" id="GO:0005829">
    <property type="term" value="C:cytosol"/>
    <property type="evidence" value="ECO:0000318"/>
    <property type="project" value="GO_Central"/>
</dbReference>
<dbReference type="GO" id="GO:0005524">
    <property type="term" value="F:ATP binding"/>
    <property type="evidence" value="ECO:0007669"/>
    <property type="project" value="UniProtKB-UniRule"/>
</dbReference>
<dbReference type="GO" id="GO:0004819">
    <property type="term" value="F:glutamine-tRNA ligase activity"/>
    <property type="evidence" value="ECO:0000318"/>
    <property type="project" value="GO_Central"/>
</dbReference>
<dbReference type="GO" id="GO:0006425">
    <property type="term" value="P:glutaminyl-tRNA aminoacylation"/>
    <property type="evidence" value="ECO:0000318"/>
    <property type="project" value="GO_Central"/>
</dbReference>
<dbReference type="GO" id="GO:0006424">
    <property type="term" value="P:glutamyl-tRNA aminoacylation"/>
    <property type="evidence" value="ECO:0007669"/>
    <property type="project" value="UniProtKB-UniRule"/>
</dbReference>
<dbReference type="FunFam" id="1.10.1160.10:FF:000001">
    <property type="entry name" value="Glutamine--tRNA ligase"/>
    <property type="match status" value="1"/>
</dbReference>
<dbReference type="FunFam" id="2.40.240.10:FF:000020">
    <property type="entry name" value="Glutamine--tRNA ligase"/>
    <property type="match status" value="1"/>
</dbReference>
<dbReference type="FunFam" id="2.40.240.10:FF:000023">
    <property type="entry name" value="Glutamine--tRNA ligase"/>
    <property type="match status" value="1"/>
</dbReference>
<dbReference type="FunFam" id="3.90.800.10:FF:000002">
    <property type="entry name" value="Glutamine--tRNA ligase"/>
    <property type="match status" value="1"/>
</dbReference>
<dbReference type="FunFam" id="3.40.50.620:FF:000037">
    <property type="entry name" value="Glutamine--tRNA ligase cytoplasmic"/>
    <property type="match status" value="1"/>
</dbReference>
<dbReference type="Gene3D" id="1.10.1160.10">
    <property type="entry name" value="Glutamyl-trna Synthetase, Domain 2"/>
    <property type="match status" value="1"/>
</dbReference>
<dbReference type="Gene3D" id="3.90.800.10">
    <property type="entry name" value="Glutamyl-tRNA Synthetase, Domain 3"/>
    <property type="match status" value="1"/>
</dbReference>
<dbReference type="Gene3D" id="3.40.50.620">
    <property type="entry name" value="HUPs"/>
    <property type="match status" value="1"/>
</dbReference>
<dbReference type="Gene3D" id="2.40.240.10">
    <property type="entry name" value="Ribosomal Protein L25, Chain P"/>
    <property type="match status" value="2"/>
</dbReference>
<dbReference type="HAMAP" id="MF_00126">
    <property type="entry name" value="Gln_tRNA_synth"/>
    <property type="match status" value="1"/>
</dbReference>
<dbReference type="InterPro" id="IPR001412">
    <property type="entry name" value="aa-tRNA-synth_I_CS"/>
</dbReference>
<dbReference type="InterPro" id="IPR050132">
    <property type="entry name" value="Gln/Glu-tRNA_Ligase"/>
</dbReference>
<dbReference type="InterPro" id="IPR022861">
    <property type="entry name" value="Gln_tRNA_ligase_bac"/>
</dbReference>
<dbReference type="InterPro" id="IPR000924">
    <property type="entry name" value="Glu/Gln-tRNA-synth"/>
</dbReference>
<dbReference type="InterPro" id="IPR020058">
    <property type="entry name" value="Glu/Gln-tRNA-synth_Ib_cat-dom"/>
</dbReference>
<dbReference type="InterPro" id="IPR020059">
    <property type="entry name" value="Glu/Gln-tRNA-synth_Ib_codon-bd"/>
</dbReference>
<dbReference type="InterPro" id="IPR020061">
    <property type="entry name" value="Glu_tRNA_lig_a-bdl"/>
</dbReference>
<dbReference type="InterPro" id="IPR020056">
    <property type="entry name" value="Rbsml_bL25/Gln-tRNA_synth_N"/>
</dbReference>
<dbReference type="InterPro" id="IPR011035">
    <property type="entry name" value="Ribosomal_bL25/Gln-tRNA_synth"/>
</dbReference>
<dbReference type="InterPro" id="IPR014729">
    <property type="entry name" value="Rossmann-like_a/b/a_fold"/>
</dbReference>
<dbReference type="InterPro" id="IPR049437">
    <property type="entry name" value="tRNA-synt_1c_C2"/>
</dbReference>
<dbReference type="NCBIfam" id="NF011291">
    <property type="entry name" value="PRK14703.1"/>
    <property type="match status" value="1"/>
</dbReference>
<dbReference type="PANTHER" id="PTHR43097:SF5">
    <property type="entry name" value="GLUTAMATE--TRNA LIGASE"/>
    <property type="match status" value="1"/>
</dbReference>
<dbReference type="PANTHER" id="PTHR43097">
    <property type="entry name" value="GLUTAMINE-TRNA LIGASE"/>
    <property type="match status" value="1"/>
</dbReference>
<dbReference type="Pfam" id="PF00749">
    <property type="entry name" value="tRNA-synt_1c"/>
    <property type="match status" value="2"/>
</dbReference>
<dbReference type="Pfam" id="PF03950">
    <property type="entry name" value="tRNA-synt_1c_C"/>
    <property type="match status" value="1"/>
</dbReference>
<dbReference type="Pfam" id="PF20974">
    <property type="entry name" value="tRNA-synt_1c_C2"/>
    <property type="match status" value="1"/>
</dbReference>
<dbReference type="PRINTS" id="PR00987">
    <property type="entry name" value="TRNASYNTHGLU"/>
</dbReference>
<dbReference type="SUPFAM" id="SSF52374">
    <property type="entry name" value="Nucleotidylyl transferase"/>
    <property type="match status" value="1"/>
</dbReference>
<dbReference type="SUPFAM" id="SSF50715">
    <property type="entry name" value="Ribosomal protein L25-like"/>
    <property type="match status" value="1"/>
</dbReference>
<dbReference type="PROSITE" id="PS00178">
    <property type="entry name" value="AA_TRNA_LIGASE_I"/>
    <property type="match status" value="1"/>
</dbReference>
<proteinExistence type="inferred from homology"/>
<organism>
    <name type="scientific">Xanthomonas campestris pv. campestris (strain ATCC 33913 / DSM 3586 / NCPPB 528 / LMG 568 / P 25)</name>
    <dbReference type="NCBI Taxonomy" id="190485"/>
    <lineage>
        <taxon>Bacteria</taxon>
        <taxon>Pseudomonadati</taxon>
        <taxon>Pseudomonadota</taxon>
        <taxon>Gammaproteobacteria</taxon>
        <taxon>Lysobacterales</taxon>
        <taxon>Lysobacteraceae</taxon>
        <taxon>Xanthomonas</taxon>
    </lineage>
</organism>
<protein>
    <recommendedName>
        <fullName evidence="1">Glutamine--tRNA ligase</fullName>
        <ecNumber evidence="1">6.1.1.18</ecNumber>
    </recommendedName>
    <alternativeName>
        <fullName evidence="1">Glutaminyl-tRNA synthetase</fullName>
        <shortName evidence="1">GlnRS</shortName>
    </alternativeName>
</protein>
<gene>
    <name evidence="1" type="primary">glnS</name>
    <name type="ordered locus">XCC0821</name>
</gene>
<comment type="catalytic activity">
    <reaction evidence="1">
        <text>tRNA(Gln) + L-glutamine + ATP = L-glutaminyl-tRNA(Gln) + AMP + diphosphate</text>
        <dbReference type="Rhea" id="RHEA:20121"/>
        <dbReference type="Rhea" id="RHEA-COMP:9662"/>
        <dbReference type="Rhea" id="RHEA-COMP:9681"/>
        <dbReference type="ChEBI" id="CHEBI:30616"/>
        <dbReference type="ChEBI" id="CHEBI:33019"/>
        <dbReference type="ChEBI" id="CHEBI:58359"/>
        <dbReference type="ChEBI" id="CHEBI:78442"/>
        <dbReference type="ChEBI" id="CHEBI:78521"/>
        <dbReference type="ChEBI" id="CHEBI:456215"/>
        <dbReference type="EC" id="6.1.1.18"/>
    </reaction>
</comment>
<comment type="subunit">
    <text evidence="1">Monomer.</text>
</comment>
<comment type="subcellular location">
    <subcellularLocation>
        <location evidence="1">Cytoplasm</location>
    </subcellularLocation>
</comment>
<comment type="similarity">
    <text evidence="1">Belongs to the class-I aminoacyl-tRNA synthetase family.</text>
</comment>
<keyword id="KW-0030">Aminoacyl-tRNA synthetase</keyword>
<keyword id="KW-0067">ATP-binding</keyword>
<keyword id="KW-0963">Cytoplasm</keyword>
<keyword id="KW-0436">Ligase</keyword>
<keyword id="KW-0547">Nucleotide-binding</keyword>
<keyword id="KW-0648">Protein biosynthesis</keyword>
<keyword id="KW-1185">Reference proteome</keyword>
<evidence type="ECO:0000255" key="1">
    <source>
        <dbReference type="HAMAP-Rule" id="MF_00126"/>
    </source>
</evidence>
<reference key="1">
    <citation type="journal article" date="2002" name="Nature">
        <title>Comparison of the genomes of two Xanthomonas pathogens with differing host specificities.</title>
        <authorList>
            <person name="da Silva A.C.R."/>
            <person name="Ferro J.A."/>
            <person name="Reinach F.C."/>
            <person name="Farah C.S."/>
            <person name="Furlan L.R."/>
            <person name="Quaggio R.B."/>
            <person name="Monteiro-Vitorello C.B."/>
            <person name="Van Sluys M.A."/>
            <person name="Almeida N.F. Jr."/>
            <person name="Alves L.M.C."/>
            <person name="do Amaral A.M."/>
            <person name="Bertolini M.C."/>
            <person name="Camargo L.E.A."/>
            <person name="Camarotte G."/>
            <person name="Cannavan F."/>
            <person name="Cardozo J."/>
            <person name="Chambergo F."/>
            <person name="Ciapina L.P."/>
            <person name="Cicarelli R.M.B."/>
            <person name="Coutinho L.L."/>
            <person name="Cursino-Santos J.R."/>
            <person name="El-Dorry H."/>
            <person name="Faria J.B."/>
            <person name="Ferreira A.J.S."/>
            <person name="Ferreira R.C.C."/>
            <person name="Ferro M.I.T."/>
            <person name="Formighieri E.F."/>
            <person name="Franco M.C."/>
            <person name="Greggio C.C."/>
            <person name="Gruber A."/>
            <person name="Katsuyama A.M."/>
            <person name="Kishi L.T."/>
            <person name="Leite R.P."/>
            <person name="Lemos E.G.M."/>
            <person name="Lemos M.V.F."/>
            <person name="Locali E.C."/>
            <person name="Machado M.A."/>
            <person name="Madeira A.M.B.N."/>
            <person name="Martinez-Rossi N.M."/>
            <person name="Martins E.C."/>
            <person name="Meidanis J."/>
            <person name="Menck C.F.M."/>
            <person name="Miyaki C.Y."/>
            <person name="Moon D.H."/>
            <person name="Moreira L.M."/>
            <person name="Novo M.T.M."/>
            <person name="Okura V.K."/>
            <person name="Oliveira M.C."/>
            <person name="Oliveira V.R."/>
            <person name="Pereira H.A."/>
            <person name="Rossi A."/>
            <person name="Sena J.A.D."/>
            <person name="Silva C."/>
            <person name="de Souza R.F."/>
            <person name="Spinola L.A.F."/>
            <person name="Takita M.A."/>
            <person name="Tamura R.E."/>
            <person name="Teixeira E.C."/>
            <person name="Tezza R.I.D."/>
            <person name="Trindade dos Santos M."/>
            <person name="Truffi D."/>
            <person name="Tsai S.M."/>
            <person name="White F.F."/>
            <person name="Setubal J.C."/>
            <person name="Kitajima J.P."/>
        </authorList>
    </citation>
    <scope>NUCLEOTIDE SEQUENCE [LARGE SCALE GENOMIC DNA]</scope>
    <source>
        <strain>ATCC 33913 / DSM 3586 / NCPPB 528 / LMG 568 / P 25</strain>
    </source>
</reference>
<accession>Q8PCB3</accession>